<feature type="chain" id="PRO_1000203727" description="ATP-dependent Clp protease ATP-binding subunit ClpX">
    <location>
        <begin position="1"/>
        <end position="429"/>
    </location>
</feature>
<feature type="domain" description="ClpX-type ZB" evidence="2">
    <location>
        <begin position="1"/>
        <end position="53"/>
    </location>
</feature>
<feature type="region of interest" description="Disordered" evidence="3">
    <location>
        <begin position="408"/>
        <end position="429"/>
    </location>
</feature>
<feature type="compositionally biased region" description="Basic residues" evidence="3">
    <location>
        <begin position="413"/>
        <end position="423"/>
    </location>
</feature>
<feature type="binding site" evidence="2">
    <location>
        <position position="12"/>
    </location>
    <ligand>
        <name>Zn(2+)</name>
        <dbReference type="ChEBI" id="CHEBI:29105"/>
    </ligand>
</feature>
<feature type="binding site" evidence="2">
    <location>
        <position position="15"/>
    </location>
    <ligand>
        <name>Zn(2+)</name>
        <dbReference type="ChEBI" id="CHEBI:29105"/>
    </ligand>
</feature>
<feature type="binding site" evidence="2">
    <location>
        <position position="34"/>
    </location>
    <ligand>
        <name>Zn(2+)</name>
        <dbReference type="ChEBI" id="CHEBI:29105"/>
    </ligand>
</feature>
<feature type="binding site" evidence="2">
    <location>
        <position position="37"/>
    </location>
    <ligand>
        <name>Zn(2+)</name>
        <dbReference type="ChEBI" id="CHEBI:29105"/>
    </ligand>
</feature>
<feature type="binding site" evidence="1">
    <location>
        <begin position="116"/>
        <end position="123"/>
    </location>
    <ligand>
        <name>ATP</name>
        <dbReference type="ChEBI" id="CHEBI:30616"/>
    </ligand>
</feature>
<proteinExistence type="inferred from homology"/>
<protein>
    <recommendedName>
        <fullName evidence="1">ATP-dependent Clp protease ATP-binding subunit ClpX</fullName>
    </recommendedName>
</protein>
<organism>
    <name type="scientific">Clostridium botulinum (strain 657 / Type Ba4)</name>
    <dbReference type="NCBI Taxonomy" id="515621"/>
    <lineage>
        <taxon>Bacteria</taxon>
        <taxon>Bacillati</taxon>
        <taxon>Bacillota</taxon>
        <taxon>Clostridia</taxon>
        <taxon>Eubacteriales</taxon>
        <taxon>Clostridiaceae</taxon>
        <taxon>Clostridium</taxon>
    </lineage>
</organism>
<accession>C3KU76</accession>
<reference key="1">
    <citation type="submission" date="2008-05" db="EMBL/GenBank/DDBJ databases">
        <title>Genome sequence of Clostridium botulinum Ba4 strain 657.</title>
        <authorList>
            <person name="Shrivastava S."/>
            <person name="Brown J.L."/>
            <person name="Bruce D."/>
            <person name="Detter C."/>
            <person name="Munk C."/>
            <person name="Smith L.A."/>
            <person name="Smith T.J."/>
            <person name="Sutton G."/>
            <person name="Brettin T.S."/>
        </authorList>
    </citation>
    <scope>NUCLEOTIDE SEQUENCE [LARGE SCALE GENOMIC DNA]</scope>
    <source>
        <strain>657 / Type Ba4</strain>
    </source>
</reference>
<keyword id="KW-0067">ATP-binding</keyword>
<keyword id="KW-0143">Chaperone</keyword>
<keyword id="KW-0479">Metal-binding</keyword>
<keyword id="KW-0547">Nucleotide-binding</keyword>
<keyword id="KW-0862">Zinc</keyword>
<evidence type="ECO:0000255" key="1">
    <source>
        <dbReference type="HAMAP-Rule" id="MF_00175"/>
    </source>
</evidence>
<evidence type="ECO:0000255" key="2">
    <source>
        <dbReference type="PROSITE-ProRule" id="PRU01250"/>
    </source>
</evidence>
<evidence type="ECO:0000256" key="3">
    <source>
        <dbReference type="SAM" id="MobiDB-lite"/>
    </source>
</evidence>
<dbReference type="EMBL" id="CP001083">
    <property type="protein sequence ID" value="ACQ53170.1"/>
    <property type="molecule type" value="Genomic_DNA"/>
</dbReference>
<dbReference type="RefSeq" id="WP_003357457.1">
    <property type="nucleotide sequence ID" value="NC_012658.1"/>
</dbReference>
<dbReference type="SMR" id="C3KU76"/>
<dbReference type="GeneID" id="5187485"/>
<dbReference type="KEGG" id="cbi:CLJ_B3503"/>
<dbReference type="HOGENOM" id="CLU_014218_8_2_9"/>
<dbReference type="Proteomes" id="UP000002333">
    <property type="component" value="Chromosome"/>
</dbReference>
<dbReference type="GO" id="GO:0009376">
    <property type="term" value="C:HslUV protease complex"/>
    <property type="evidence" value="ECO:0007669"/>
    <property type="project" value="TreeGrafter"/>
</dbReference>
<dbReference type="GO" id="GO:0005524">
    <property type="term" value="F:ATP binding"/>
    <property type="evidence" value="ECO:0007669"/>
    <property type="project" value="UniProtKB-UniRule"/>
</dbReference>
<dbReference type="GO" id="GO:0016887">
    <property type="term" value="F:ATP hydrolysis activity"/>
    <property type="evidence" value="ECO:0007669"/>
    <property type="project" value="InterPro"/>
</dbReference>
<dbReference type="GO" id="GO:0140662">
    <property type="term" value="F:ATP-dependent protein folding chaperone"/>
    <property type="evidence" value="ECO:0007669"/>
    <property type="project" value="InterPro"/>
</dbReference>
<dbReference type="GO" id="GO:0046983">
    <property type="term" value="F:protein dimerization activity"/>
    <property type="evidence" value="ECO:0007669"/>
    <property type="project" value="InterPro"/>
</dbReference>
<dbReference type="GO" id="GO:0051082">
    <property type="term" value="F:unfolded protein binding"/>
    <property type="evidence" value="ECO:0007669"/>
    <property type="project" value="UniProtKB-UniRule"/>
</dbReference>
<dbReference type="GO" id="GO:0008270">
    <property type="term" value="F:zinc ion binding"/>
    <property type="evidence" value="ECO:0007669"/>
    <property type="project" value="InterPro"/>
</dbReference>
<dbReference type="GO" id="GO:0051301">
    <property type="term" value="P:cell division"/>
    <property type="evidence" value="ECO:0007669"/>
    <property type="project" value="TreeGrafter"/>
</dbReference>
<dbReference type="GO" id="GO:0051603">
    <property type="term" value="P:proteolysis involved in protein catabolic process"/>
    <property type="evidence" value="ECO:0007669"/>
    <property type="project" value="TreeGrafter"/>
</dbReference>
<dbReference type="CDD" id="cd19497">
    <property type="entry name" value="RecA-like_ClpX"/>
    <property type="match status" value="1"/>
</dbReference>
<dbReference type="FunFam" id="1.10.8.60:FF:000002">
    <property type="entry name" value="ATP-dependent Clp protease ATP-binding subunit ClpX"/>
    <property type="match status" value="1"/>
</dbReference>
<dbReference type="FunFam" id="3.40.50.300:FF:000005">
    <property type="entry name" value="ATP-dependent Clp protease ATP-binding subunit ClpX"/>
    <property type="match status" value="1"/>
</dbReference>
<dbReference type="Gene3D" id="1.10.8.60">
    <property type="match status" value="1"/>
</dbReference>
<dbReference type="Gene3D" id="6.20.220.10">
    <property type="entry name" value="ClpX chaperone, C4-type zinc finger domain"/>
    <property type="match status" value="1"/>
</dbReference>
<dbReference type="Gene3D" id="3.40.50.300">
    <property type="entry name" value="P-loop containing nucleotide triphosphate hydrolases"/>
    <property type="match status" value="1"/>
</dbReference>
<dbReference type="HAMAP" id="MF_00175">
    <property type="entry name" value="ClpX"/>
    <property type="match status" value="1"/>
</dbReference>
<dbReference type="InterPro" id="IPR003593">
    <property type="entry name" value="AAA+_ATPase"/>
</dbReference>
<dbReference type="InterPro" id="IPR050052">
    <property type="entry name" value="ATP-dep_Clp_protease_ClpX"/>
</dbReference>
<dbReference type="InterPro" id="IPR003959">
    <property type="entry name" value="ATPase_AAA_core"/>
</dbReference>
<dbReference type="InterPro" id="IPR019489">
    <property type="entry name" value="Clp_ATPase_C"/>
</dbReference>
<dbReference type="InterPro" id="IPR004487">
    <property type="entry name" value="Clp_protease_ATP-bd_su_ClpX"/>
</dbReference>
<dbReference type="InterPro" id="IPR046425">
    <property type="entry name" value="ClpX_bact"/>
</dbReference>
<dbReference type="InterPro" id="IPR027417">
    <property type="entry name" value="P-loop_NTPase"/>
</dbReference>
<dbReference type="InterPro" id="IPR010603">
    <property type="entry name" value="Znf_CppX_C4"/>
</dbReference>
<dbReference type="InterPro" id="IPR038366">
    <property type="entry name" value="Znf_CppX_C4_sf"/>
</dbReference>
<dbReference type="NCBIfam" id="TIGR00382">
    <property type="entry name" value="clpX"/>
    <property type="match status" value="1"/>
</dbReference>
<dbReference type="NCBIfam" id="NF003745">
    <property type="entry name" value="PRK05342.1"/>
    <property type="match status" value="1"/>
</dbReference>
<dbReference type="PANTHER" id="PTHR48102:SF7">
    <property type="entry name" value="ATP-DEPENDENT CLP PROTEASE ATP-BINDING SUBUNIT CLPX-LIKE, MITOCHONDRIAL"/>
    <property type="match status" value="1"/>
</dbReference>
<dbReference type="PANTHER" id="PTHR48102">
    <property type="entry name" value="ATP-DEPENDENT CLP PROTEASE ATP-BINDING SUBUNIT CLPX-LIKE, MITOCHONDRIAL-RELATED"/>
    <property type="match status" value="1"/>
</dbReference>
<dbReference type="Pfam" id="PF07724">
    <property type="entry name" value="AAA_2"/>
    <property type="match status" value="1"/>
</dbReference>
<dbReference type="Pfam" id="PF10431">
    <property type="entry name" value="ClpB_D2-small"/>
    <property type="match status" value="1"/>
</dbReference>
<dbReference type="Pfam" id="PF06689">
    <property type="entry name" value="zf-C4_ClpX"/>
    <property type="match status" value="1"/>
</dbReference>
<dbReference type="SMART" id="SM00382">
    <property type="entry name" value="AAA"/>
    <property type="match status" value="1"/>
</dbReference>
<dbReference type="SMART" id="SM01086">
    <property type="entry name" value="ClpB_D2-small"/>
    <property type="match status" value="1"/>
</dbReference>
<dbReference type="SMART" id="SM00994">
    <property type="entry name" value="zf-C4_ClpX"/>
    <property type="match status" value="1"/>
</dbReference>
<dbReference type="SUPFAM" id="SSF57716">
    <property type="entry name" value="Glucocorticoid receptor-like (DNA-binding domain)"/>
    <property type="match status" value="1"/>
</dbReference>
<dbReference type="SUPFAM" id="SSF52540">
    <property type="entry name" value="P-loop containing nucleoside triphosphate hydrolases"/>
    <property type="match status" value="1"/>
</dbReference>
<dbReference type="PROSITE" id="PS51902">
    <property type="entry name" value="CLPX_ZB"/>
    <property type="match status" value="1"/>
</dbReference>
<comment type="function">
    <text evidence="1">ATP-dependent specificity component of the Clp protease. It directs the protease to specific substrates. Can perform chaperone functions in the absence of ClpP.</text>
</comment>
<comment type="subunit">
    <text evidence="1">Component of the ClpX-ClpP complex. Forms a hexameric ring that, in the presence of ATP, binds to fourteen ClpP subunits assembled into a disk-like structure with a central cavity, resembling the structure of eukaryotic proteasomes.</text>
</comment>
<comment type="similarity">
    <text evidence="1">Belongs to the ClpX chaperone family.</text>
</comment>
<name>CLPX_CLOB6</name>
<sequence length="429" mass="47859">MSKLDEKKQLKCSFCGKTQDQVRRLIAGPGVYICDECIELCSEIINDEFEDDIQVDLTSLPKPTEIKTYLDQYVIGQEDAKKSLSVAVYNHYKRINSNTNNDDVELQKSNILLLGPTGSGKTLLAQTLAKFLNVPFAIADATTLTEAGYVGEDVENILLKLIQNADYDIEKAEKGIVYIDEIDKIARKSENPSITRDVSGEGVQQALLKILEGTVAAVPPQGGRKHPHQEFIQINTTNILFICGGAFDGVDKIIERRTRTSSLGFGAEIQSKKEKDLGKLLKDIMPGDLLKFGLIPEFIGRLPIVVTLDKLDREALIKILTEPKNALVKQYKKLFELDDVELEFNQEALKEIADEAINRNTGARGLRAIIEDMMREIMFDIPSQENIGKVIVNEDCIKTKKPELIEAEGGKRLPIKPKKGKKRKDSETA</sequence>
<gene>
    <name evidence="1" type="primary">clpX</name>
    <name type="ordered locus">CLJ_B3503</name>
</gene>